<feature type="chain" id="PRO_0000163776" description="Ribonuclease Y">
    <location>
        <begin position="1"/>
        <end position="531"/>
    </location>
</feature>
<feature type="transmembrane region" description="Helical" evidence="1">
    <location>
        <begin position="3"/>
        <end position="23"/>
    </location>
</feature>
<feature type="domain" description="KH" evidence="1">
    <location>
        <begin position="221"/>
        <end position="281"/>
    </location>
</feature>
<feature type="domain" description="HD" evidence="2">
    <location>
        <begin position="347"/>
        <end position="440"/>
    </location>
</feature>
<dbReference type="EC" id="3.1.-.-" evidence="1"/>
<dbReference type="EMBL" id="AE005176">
    <property type="protein sequence ID" value="AAK05998.1"/>
    <property type="molecule type" value="Genomic_DNA"/>
</dbReference>
<dbReference type="PIR" id="D86862">
    <property type="entry name" value="D86862"/>
</dbReference>
<dbReference type="RefSeq" id="NP_268057.1">
    <property type="nucleotide sequence ID" value="NC_002662.1"/>
</dbReference>
<dbReference type="RefSeq" id="WP_003131467.1">
    <property type="nucleotide sequence ID" value="NC_002662.1"/>
</dbReference>
<dbReference type="SMR" id="Q9CEE2"/>
<dbReference type="PaxDb" id="272623-L150593"/>
<dbReference type="EnsemblBacteria" id="AAK05998">
    <property type="protein sequence ID" value="AAK05998"/>
    <property type="gene ID" value="L150593"/>
</dbReference>
<dbReference type="GeneID" id="89634257"/>
<dbReference type="KEGG" id="lla:L150593"/>
<dbReference type="PATRIC" id="fig|272623.7.peg.2035"/>
<dbReference type="eggNOG" id="COG1418">
    <property type="taxonomic scope" value="Bacteria"/>
</dbReference>
<dbReference type="HOGENOM" id="CLU_028328_1_0_9"/>
<dbReference type="OrthoDB" id="9803205at2"/>
<dbReference type="Proteomes" id="UP000002196">
    <property type="component" value="Chromosome"/>
</dbReference>
<dbReference type="GO" id="GO:0005886">
    <property type="term" value="C:plasma membrane"/>
    <property type="evidence" value="ECO:0007669"/>
    <property type="project" value="UniProtKB-SubCell"/>
</dbReference>
<dbReference type="GO" id="GO:0003723">
    <property type="term" value="F:RNA binding"/>
    <property type="evidence" value="ECO:0007669"/>
    <property type="project" value="UniProtKB-UniRule"/>
</dbReference>
<dbReference type="GO" id="GO:0004521">
    <property type="term" value="F:RNA endonuclease activity"/>
    <property type="evidence" value="ECO:0007669"/>
    <property type="project" value="UniProtKB-UniRule"/>
</dbReference>
<dbReference type="GO" id="GO:0006402">
    <property type="term" value="P:mRNA catabolic process"/>
    <property type="evidence" value="ECO:0007669"/>
    <property type="project" value="UniProtKB-UniRule"/>
</dbReference>
<dbReference type="CDD" id="cd00077">
    <property type="entry name" value="HDc"/>
    <property type="match status" value="1"/>
</dbReference>
<dbReference type="CDD" id="cd22431">
    <property type="entry name" value="KH-I_RNaseY"/>
    <property type="match status" value="1"/>
</dbReference>
<dbReference type="FunFam" id="1.10.3210.10:FF:000003">
    <property type="entry name" value="Ribonuclease Y"/>
    <property type="match status" value="1"/>
</dbReference>
<dbReference type="FunFam" id="3.30.1370.10:FF:000006">
    <property type="entry name" value="Ribonuclease Y"/>
    <property type="match status" value="1"/>
</dbReference>
<dbReference type="Gene3D" id="1.10.3210.10">
    <property type="entry name" value="Hypothetical protein af1432"/>
    <property type="match status" value="1"/>
</dbReference>
<dbReference type="Gene3D" id="3.30.1370.10">
    <property type="entry name" value="K Homology domain, type 1"/>
    <property type="match status" value="1"/>
</dbReference>
<dbReference type="HAMAP" id="MF_00335">
    <property type="entry name" value="RNase_Y"/>
    <property type="match status" value="1"/>
</dbReference>
<dbReference type="InterPro" id="IPR003607">
    <property type="entry name" value="HD/PDEase_dom"/>
</dbReference>
<dbReference type="InterPro" id="IPR006674">
    <property type="entry name" value="HD_domain"/>
</dbReference>
<dbReference type="InterPro" id="IPR006675">
    <property type="entry name" value="HDIG_dom"/>
</dbReference>
<dbReference type="InterPro" id="IPR004087">
    <property type="entry name" value="KH_dom"/>
</dbReference>
<dbReference type="InterPro" id="IPR004088">
    <property type="entry name" value="KH_dom_type_1"/>
</dbReference>
<dbReference type="InterPro" id="IPR036612">
    <property type="entry name" value="KH_dom_type_1_sf"/>
</dbReference>
<dbReference type="InterPro" id="IPR017705">
    <property type="entry name" value="Ribonuclease_Y"/>
</dbReference>
<dbReference type="InterPro" id="IPR022711">
    <property type="entry name" value="RNase_Y_N"/>
</dbReference>
<dbReference type="NCBIfam" id="TIGR00277">
    <property type="entry name" value="HDIG"/>
    <property type="match status" value="1"/>
</dbReference>
<dbReference type="NCBIfam" id="TIGR03319">
    <property type="entry name" value="RNase_Y"/>
    <property type="match status" value="1"/>
</dbReference>
<dbReference type="PANTHER" id="PTHR12826">
    <property type="entry name" value="RIBONUCLEASE Y"/>
    <property type="match status" value="1"/>
</dbReference>
<dbReference type="PANTHER" id="PTHR12826:SF15">
    <property type="entry name" value="RIBONUCLEASE Y"/>
    <property type="match status" value="1"/>
</dbReference>
<dbReference type="Pfam" id="PF01966">
    <property type="entry name" value="HD"/>
    <property type="match status" value="1"/>
</dbReference>
<dbReference type="Pfam" id="PF00013">
    <property type="entry name" value="KH_1"/>
    <property type="match status" value="1"/>
</dbReference>
<dbReference type="Pfam" id="PF12072">
    <property type="entry name" value="RNase_Y_N"/>
    <property type="match status" value="1"/>
</dbReference>
<dbReference type="SMART" id="SM00471">
    <property type="entry name" value="HDc"/>
    <property type="match status" value="1"/>
</dbReference>
<dbReference type="SMART" id="SM00322">
    <property type="entry name" value="KH"/>
    <property type="match status" value="1"/>
</dbReference>
<dbReference type="SUPFAM" id="SSF54791">
    <property type="entry name" value="Eukaryotic type KH-domain (KH-domain type I)"/>
    <property type="match status" value="1"/>
</dbReference>
<dbReference type="SUPFAM" id="SSF109604">
    <property type="entry name" value="HD-domain/PDEase-like"/>
    <property type="match status" value="1"/>
</dbReference>
<dbReference type="PROSITE" id="PS51831">
    <property type="entry name" value="HD"/>
    <property type="match status" value="1"/>
</dbReference>
<dbReference type="PROSITE" id="PS50084">
    <property type="entry name" value="KH_TYPE_1"/>
    <property type="match status" value="1"/>
</dbReference>
<evidence type="ECO:0000255" key="1">
    <source>
        <dbReference type="HAMAP-Rule" id="MF_00335"/>
    </source>
</evidence>
<evidence type="ECO:0000255" key="2">
    <source>
        <dbReference type="PROSITE-ProRule" id="PRU01175"/>
    </source>
</evidence>
<reference key="1">
    <citation type="journal article" date="2001" name="Genome Res.">
        <title>The complete genome sequence of the lactic acid bacterium Lactococcus lactis ssp. lactis IL1403.</title>
        <authorList>
            <person name="Bolotin A."/>
            <person name="Wincker P."/>
            <person name="Mauger S."/>
            <person name="Jaillon O."/>
            <person name="Malarme K."/>
            <person name="Weissenbach J."/>
            <person name="Ehrlich S.D."/>
            <person name="Sorokin A."/>
        </authorList>
    </citation>
    <scope>NUCLEOTIDE SEQUENCE [LARGE SCALE GENOMIC DNA]</scope>
    <source>
        <strain>IL1403</strain>
    </source>
</reference>
<gene>
    <name evidence="1" type="primary">rny</name>
    <name type="synonym">ytgF</name>
    <name type="ordered locus">LL1900</name>
    <name type="ORF">L150593</name>
</gene>
<keyword id="KW-1003">Cell membrane</keyword>
<keyword id="KW-0255">Endonuclease</keyword>
<keyword id="KW-0378">Hydrolase</keyword>
<keyword id="KW-0472">Membrane</keyword>
<keyword id="KW-0540">Nuclease</keyword>
<keyword id="KW-1185">Reference proteome</keyword>
<keyword id="KW-0694">RNA-binding</keyword>
<keyword id="KW-0812">Transmembrane</keyword>
<keyword id="KW-1133">Transmembrane helix</keyword>
<accession>Q9CEE2</accession>
<proteinExistence type="inferred from homology"/>
<comment type="function">
    <text evidence="1">Endoribonuclease that initiates mRNA decay.</text>
</comment>
<comment type="subcellular location">
    <subcellularLocation>
        <location evidence="1">Cell membrane</location>
        <topology evidence="1">Single-pass membrane protein</topology>
    </subcellularLocation>
</comment>
<comment type="similarity">
    <text evidence="1">Belongs to the RNase Y family.</text>
</comment>
<organism>
    <name type="scientific">Lactococcus lactis subsp. lactis (strain IL1403)</name>
    <name type="common">Streptococcus lactis</name>
    <dbReference type="NCBI Taxonomy" id="272623"/>
    <lineage>
        <taxon>Bacteria</taxon>
        <taxon>Bacillati</taxon>
        <taxon>Bacillota</taxon>
        <taxon>Bacilli</taxon>
        <taxon>Lactobacillales</taxon>
        <taxon>Streptococcaceae</taxon>
        <taxon>Lactococcus</taxon>
    </lineage>
</organism>
<protein>
    <recommendedName>
        <fullName evidence="1">Ribonuclease Y</fullName>
        <shortName evidence="1">RNase Y</shortName>
        <ecNumber evidence="1">3.1.-.-</ecNumber>
    </recommendedName>
</protein>
<sequence>MDIISIVLLVLLVVLVVAFIFYAQNIKKNKQDAESLFNEAENKANEVMANAKREAESLKMEAEAFKKEARYTLREEEQKQRREIEDEFKQERQELKETEKRLKQREEILDRKDDTLTKKEENLDSKEENLVRKTDTLSKREEQLAHIEEKKRLELERISNLSTDDAREIILSETRDGLTKEMAQIIRQSEEKAQVEADKRAKNIISLAIQRVSSDSVAEQTVSVVNLPDDGMKGRIIGREGRNIRTFEALTGIDVIIDDTPEAVVLSGFDPIRREIARMTLEQLVQDGRIHPARIEELVEKNRKALDHKMREYGEQAAFEVGAHNLHPDLMKIMGRLHFRTSYGQNVLDHSVEVAHIAGNLAGEMGENVALAKRAGFLHDIGKALDHEVEGSHVEIGTELARKYKENPIVINTIASHHGDTEPLSNIAVLVAAADALSAARPGARRESIENYIKRLKDLEAISTSFEGVETAFALQAGREIRVMVKPEKLTDDQIVILARDVKNRIEDEMDYPGNIKITVIRETRAIDYAK</sequence>
<name>RNY_LACLA</name>